<gene>
    <name type="primary">REXO5</name>
    <name type="ORF">QtsA-10054</name>
</gene>
<protein>
    <recommendedName>
        <fullName>RNA exonuclease 5</fullName>
        <ecNumber>3.1.-.-</ecNumber>
    </recommendedName>
    <alternativeName>
        <fullName>Putative RNA exonuclease NEF-sp</fullName>
    </alternativeName>
</protein>
<feature type="chain" id="PRO_0000287346" description="RNA exonuclease 5">
    <location>
        <begin position="1"/>
        <end position="772"/>
    </location>
</feature>
<feature type="domain" description="Exonuclease">
    <location>
        <begin position="228"/>
        <end position="376"/>
    </location>
</feature>
<feature type="domain" description="RRM 1" evidence="1">
    <location>
        <begin position="505"/>
        <end position="579"/>
    </location>
</feature>
<feature type="domain" description="RRM 2" evidence="1">
    <location>
        <begin position="600"/>
        <end position="679"/>
    </location>
</feature>
<feature type="region of interest" description="Disordered" evidence="2">
    <location>
        <begin position="1"/>
        <end position="26"/>
    </location>
</feature>
<feature type="compositionally biased region" description="Basic and acidic residues" evidence="2">
    <location>
        <begin position="1"/>
        <end position="10"/>
    </location>
</feature>
<feature type="compositionally biased region" description="Basic residues" evidence="2">
    <location>
        <begin position="11"/>
        <end position="21"/>
    </location>
</feature>
<reference key="1">
    <citation type="submission" date="2006-10" db="EMBL/GenBank/DDBJ databases">
        <title>DNA sequences of macaque genes expressed in brain or testis and its evolutionary implications.</title>
        <authorList>
            <consortium name="International consortium for macaque cDNA sequencing and analysis"/>
        </authorList>
    </citation>
    <scope>NUCLEOTIDE SEQUENCE [LARGE SCALE MRNA]</scope>
    <source>
        <tissue>Testis</tissue>
    </source>
</reference>
<sequence length="772" mass="87040">MEPEREGTERHPRKVRKRRQAPNKLVGAAEAMKASWDLEESQPEAKKARLSTILFTDNCEVTHDQLCELLKYAVLGKSNVPKPSWCQLFHQNHLNNVVVFVLQGMSQLHFYRFYLEFGCLRKAFRHKFRLPPPSSDFLADIVGLQTKQRVGDLPKTMEGPLPSNAKATINLQNDPIIQKYGCKKVGLTRCLLTKEEMRTFHFPLQGFPECENFLLTKCNGSIADNSPLFGLDCEMCLTSKGRELTRISLVAEGGCCVMDELVKPENKILDYLTSFSGITKKILNPVTTKLKDVQRQLKALLPPDAVLVGHSLDLDLRALKMIHPYVIDTSLLYVREQGRRFKLKFLAKAILGKDIQCPDRLGHDATEDARIILELAQYFLKYGPKKIAELNLEALANHQEIQAAGQEPRNTTEILQHPNTSVLECLDSVGQKLLFLTRETDAGELASSRNCQTIKCLSNKEVLEQARVEIPLFPFSIVQFSFKAFSPILTEEMNKRMRIKWTEISTVYAGPFSKNCNLRALKRLFKSFGPVQSMTFVLETRQPHLCIQYEVLEAAQLAIESLDGILVDGTCIKVQRPVTELTLDCETLVNELEGDSENQGSIYLFGVSETFKEQLLQEPRLFLGLGAVILPKDLKNGKQKKYCFLKFKSFGSAQRALNILTGKDWKLKGRHALTPRHLHAWLRGLPPESRRPAGLRVVPPPFEQEALQTLKLDHPKIAAWRWGRKIGKLYNSLCPGTLCLILLPGTKSTHGSLSGLGLMGIKEEEESTISGL</sequence>
<proteinExistence type="evidence at transcript level"/>
<evidence type="ECO:0000255" key="1">
    <source>
        <dbReference type="PROSITE-ProRule" id="PRU00176"/>
    </source>
</evidence>
<evidence type="ECO:0000256" key="2">
    <source>
        <dbReference type="SAM" id="MobiDB-lite"/>
    </source>
</evidence>
<name>REXO5_MACFA</name>
<organism>
    <name type="scientific">Macaca fascicularis</name>
    <name type="common">Crab-eating macaque</name>
    <name type="synonym">Cynomolgus monkey</name>
    <dbReference type="NCBI Taxonomy" id="9541"/>
    <lineage>
        <taxon>Eukaryota</taxon>
        <taxon>Metazoa</taxon>
        <taxon>Chordata</taxon>
        <taxon>Craniata</taxon>
        <taxon>Vertebrata</taxon>
        <taxon>Euteleostomi</taxon>
        <taxon>Mammalia</taxon>
        <taxon>Eutheria</taxon>
        <taxon>Euarchontoglires</taxon>
        <taxon>Primates</taxon>
        <taxon>Haplorrhini</taxon>
        <taxon>Catarrhini</taxon>
        <taxon>Cercopithecidae</taxon>
        <taxon>Cercopithecinae</taxon>
        <taxon>Macaca</taxon>
    </lineage>
</organism>
<keyword id="KW-0269">Exonuclease</keyword>
<keyword id="KW-0378">Hydrolase</keyword>
<keyword id="KW-0540">Nuclease</keyword>
<keyword id="KW-1185">Reference proteome</keyword>
<keyword id="KW-0677">Repeat</keyword>
<keyword id="KW-0694">RNA-binding</keyword>
<dbReference type="EC" id="3.1.-.-"/>
<dbReference type="EMBL" id="AB168139">
    <property type="protein sequence ID" value="BAE00264.1"/>
    <property type="molecule type" value="mRNA"/>
</dbReference>
<dbReference type="RefSeq" id="NP_001271822.1">
    <property type="nucleotide sequence ID" value="NM_001284893.1"/>
</dbReference>
<dbReference type="SMR" id="Q4R9F7"/>
<dbReference type="STRING" id="9541.ENSMFAP00000006267"/>
<dbReference type="eggNOG" id="KOG2248">
    <property type="taxonomic scope" value="Eukaryota"/>
</dbReference>
<dbReference type="Proteomes" id="UP000233100">
    <property type="component" value="Unplaced"/>
</dbReference>
<dbReference type="GO" id="GO:0005634">
    <property type="term" value="C:nucleus"/>
    <property type="evidence" value="ECO:0007669"/>
    <property type="project" value="TreeGrafter"/>
</dbReference>
<dbReference type="GO" id="GO:0004527">
    <property type="term" value="F:exonuclease activity"/>
    <property type="evidence" value="ECO:0007669"/>
    <property type="project" value="UniProtKB-KW"/>
</dbReference>
<dbReference type="GO" id="GO:0003723">
    <property type="term" value="F:RNA binding"/>
    <property type="evidence" value="ECO:0007669"/>
    <property type="project" value="UniProtKB-KW"/>
</dbReference>
<dbReference type="CDD" id="cd06145">
    <property type="entry name" value="REX1_like"/>
    <property type="match status" value="1"/>
</dbReference>
<dbReference type="FunFam" id="3.30.70.330:FF:000528">
    <property type="entry name" value="RNA exonuclease 5"/>
    <property type="match status" value="1"/>
</dbReference>
<dbReference type="FunFam" id="3.30.420.10:FF:000055">
    <property type="entry name" value="RNA exonuclease 5 isoform X1"/>
    <property type="match status" value="1"/>
</dbReference>
<dbReference type="FunFam" id="3.30.70.330:FF:000358">
    <property type="entry name" value="RNA exonuclease 5 isoform X1"/>
    <property type="match status" value="1"/>
</dbReference>
<dbReference type="Gene3D" id="3.30.70.330">
    <property type="match status" value="2"/>
</dbReference>
<dbReference type="Gene3D" id="3.30.420.10">
    <property type="entry name" value="Ribonuclease H-like superfamily/Ribonuclease H"/>
    <property type="match status" value="1"/>
</dbReference>
<dbReference type="InterPro" id="IPR013520">
    <property type="entry name" value="Exonuclease_RNaseT/DNA_pol3"/>
</dbReference>
<dbReference type="InterPro" id="IPR012677">
    <property type="entry name" value="Nucleotide-bd_a/b_plait_sf"/>
</dbReference>
<dbReference type="InterPro" id="IPR035979">
    <property type="entry name" value="RBD_domain_sf"/>
</dbReference>
<dbReference type="InterPro" id="IPR034922">
    <property type="entry name" value="REX1-like_exo"/>
</dbReference>
<dbReference type="InterPro" id="IPR047021">
    <property type="entry name" value="REXO1/3/4-like"/>
</dbReference>
<dbReference type="InterPro" id="IPR012337">
    <property type="entry name" value="RNaseH-like_sf"/>
</dbReference>
<dbReference type="InterPro" id="IPR036397">
    <property type="entry name" value="RNaseH_sf"/>
</dbReference>
<dbReference type="InterPro" id="IPR000504">
    <property type="entry name" value="RRM_dom"/>
</dbReference>
<dbReference type="PANTHER" id="PTHR12801:SF82">
    <property type="entry name" value="RNA EXONUCLEASE 5"/>
    <property type="match status" value="1"/>
</dbReference>
<dbReference type="PANTHER" id="PTHR12801">
    <property type="entry name" value="RNA EXONUCLEASE REXO1 / RECO3 FAMILY MEMBER-RELATED"/>
    <property type="match status" value="1"/>
</dbReference>
<dbReference type="Pfam" id="PF00929">
    <property type="entry name" value="RNase_T"/>
    <property type="match status" value="1"/>
</dbReference>
<dbReference type="Pfam" id="PF00076">
    <property type="entry name" value="RRM_1"/>
    <property type="match status" value="1"/>
</dbReference>
<dbReference type="SMART" id="SM00479">
    <property type="entry name" value="EXOIII"/>
    <property type="match status" value="1"/>
</dbReference>
<dbReference type="SMART" id="SM00360">
    <property type="entry name" value="RRM"/>
    <property type="match status" value="2"/>
</dbReference>
<dbReference type="SUPFAM" id="SSF53098">
    <property type="entry name" value="Ribonuclease H-like"/>
    <property type="match status" value="1"/>
</dbReference>
<dbReference type="SUPFAM" id="SSF54928">
    <property type="entry name" value="RNA-binding domain, RBD"/>
    <property type="match status" value="1"/>
</dbReference>
<dbReference type="PROSITE" id="PS50102">
    <property type="entry name" value="RRM"/>
    <property type="match status" value="1"/>
</dbReference>
<accession>Q4R9F7</accession>